<dbReference type="EMBL" id="AE017220">
    <property type="protein sequence ID" value="AAX66036.1"/>
    <property type="molecule type" value="Genomic_DNA"/>
</dbReference>
<dbReference type="RefSeq" id="WP_011264323.1">
    <property type="nucleotide sequence ID" value="NC_006905.1"/>
</dbReference>
<dbReference type="SMR" id="Q57MM5"/>
<dbReference type="KEGG" id="sec:SCH_2130"/>
<dbReference type="HOGENOM" id="CLU_002755_1_1_6"/>
<dbReference type="Proteomes" id="UP000000538">
    <property type="component" value="Chromosome"/>
</dbReference>
<dbReference type="GO" id="GO:0005886">
    <property type="term" value="C:plasma membrane"/>
    <property type="evidence" value="ECO:0007669"/>
    <property type="project" value="UniProtKB-SubCell"/>
</dbReference>
<dbReference type="GO" id="GO:0042910">
    <property type="term" value="F:xenobiotic transmembrane transporter activity"/>
    <property type="evidence" value="ECO:0007669"/>
    <property type="project" value="TreeGrafter"/>
</dbReference>
<dbReference type="FunFam" id="1.20.1640.10:FF:000001">
    <property type="entry name" value="Efflux pump membrane transporter"/>
    <property type="match status" value="1"/>
</dbReference>
<dbReference type="FunFam" id="3.30.70.1430:FF:000001">
    <property type="entry name" value="Efflux pump membrane transporter"/>
    <property type="match status" value="1"/>
</dbReference>
<dbReference type="FunFam" id="3.30.2090.10:FF:000003">
    <property type="entry name" value="Multidrug resistance protein MdtB"/>
    <property type="match status" value="1"/>
</dbReference>
<dbReference type="Gene3D" id="3.30.70.1430">
    <property type="entry name" value="Multidrug efflux transporter AcrB pore domain"/>
    <property type="match status" value="2"/>
</dbReference>
<dbReference type="Gene3D" id="3.30.70.1440">
    <property type="entry name" value="Multidrug efflux transporter AcrB pore domain"/>
    <property type="match status" value="1"/>
</dbReference>
<dbReference type="Gene3D" id="3.30.70.1320">
    <property type="entry name" value="Multidrug efflux transporter AcrB pore domain like"/>
    <property type="match status" value="1"/>
</dbReference>
<dbReference type="Gene3D" id="3.30.2090.10">
    <property type="entry name" value="Multidrug efflux transporter AcrB TolC docking domain, DN and DC subdomains"/>
    <property type="match status" value="2"/>
</dbReference>
<dbReference type="Gene3D" id="1.20.1640.10">
    <property type="entry name" value="Multidrug efflux transporter AcrB transmembrane domain"/>
    <property type="match status" value="2"/>
</dbReference>
<dbReference type="HAMAP" id="MF_01423">
    <property type="entry name" value="MdtB"/>
    <property type="match status" value="1"/>
</dbReference>
<dbReference type="InterPro" id="IPR027463">
    <property type="entry name" value="AcrB_DN_DC_subdom"/>
</dbReference>
<dbReference type="InterPro" id="IPR001036">
    <property type="entry name" value="Acrflvin-R"/>
</dbReference>
<dbReference type="InterPro" id="IPR022831">
    <property type="entry name" value="Multidrug-R_MdtB"/>
</dbReference>
<dbReference type="NCBIfam" id="NF007798">
    <property type="entry name" value="PRK10503.1"/>
    <property type="match status" value="1"/>
</dbReference>
<dbReference type="NCBIfam" id="NF033617">
    <property type="entry name" value="RND_permease_2"/>
    <property type="match status" value="1"/>
</dbReference>
<dbReference type="PANTHER" id="PTHR32063">
    <property type="match status" value="1"/>
</dbReference>
<dbReference type="PANTHER" id="PTHR32063:SF21">
    <property type="entry name" value="MULTIDRUG RESISTANCE PROTEIN MDTB"/>
    <property type="match status" value="1"/>
</dbReference>
<dbReference type="Pfam" id="PF00873">
    <property type="entry name" value="ACR_tran"/>
    <property type="match status" value="1"/>
</dbReference>
<dbReference type="PRINTS" id="PR00702">
    <property type="entry name" value="ACRIFLAVINRP"/>
</dbReference>
<dbReference type="SUPFAM" id="SSF82693">
    <property type="entry name" value="Multidrug efflux transporter AcrB pore domain, PN1, PN2, PC1 and PC2 subdomains"/>
    <property type="match status" value="3"/>
</dbReference>
<dbReference type="SUPFAM" id="SSF82714">
    <property type="entry name" value="Multidrug efflux transporter AcrB TolC docking domain, DN and DC subdomains"/>
    <property type="match status" value="2"/>
</dbReference>
<dbReference type="SUPFAM" id="SSF82866">
    <property type="entry name" value="Multidrug efflux transporter AcrB transmembrane domain"/>
    <property type="match status" value="2"/>
</dbReference>
<name>MDTB_SALCH</name>
<accession>Q57MM5</accession>
<evidence type="ECO:0000255" key="1">
    <source>
        <dbReference type="HAMAP-Rule" id="MF_01423"/>
    </source>
</evidence>
<protein>
    <recommendedName>
        <fullName evidence="1">Multidrug resistance protein MdtB</fullName>
    </recommendedName>
    <alternativeName>
        <fullName evidence="1">Multidrug transporter MdtB</fullName>
    </alternativeName>
</protein>
<reference key="1">
    <citation type="journal article" date="2005" name="Nucleic Acids Res.">
        <title>The genome sequence of Salmonella enterica serovar Choleraesuis, a highly invasive and resistant zoonotic pathogen.</title>
        <authorList>
            <person name="Chiu C.-H."/>
            <person name="Tang P."/>
            <person name="Chu C."/>
            <person name="Hu S."/>
            <person name="Bao Q."/>
            <person name="Yu J."/>
            <person name="Chou Y.-Y."/>
            <person name="Wang H.-S."/>
            <person name="Lee Y.-S."/>
        </authorList>
    </citation>
    <scope>NUCLEOTIDE SEQUENCE [LARGE SCALE GENOMIC DNA]</scope>
    <source>
        <strain>SC-B67</strain>
    </source>
</reference>
<keyword id="KW-0997">Cell inner membrane</keyword>
<keyword id="KW-1003">Cell membrane</keyword>
<keyword id="KW-0472">Membrane</keyword>
<keyword id="KW-0812">Transmembrane</keyword>
<keyword id="KW-1133">Transmembrane helix</keyword>
<keyword id="KW-0813">Transport</keyword>
<sequence>MQVLPPGSTGGPSRLFILRPVATTLLMAAILLAGIIGYRFLPVAALPEVDYPTIQVVTLYPGASPDVMTSAVTAPLERQFGQMSGLKQMSSQSSGGASVVTLQFQLTLPLDVAEQEVQAAINAATNLLPSDLPNPPIYSKVNPADPPIMTLAVTSNAMPMTQVEDMVETRVAQKISQVSGVGLVTLAGGQRPAVRVKLNAQAVAALGLTSETVRTAITGANVNSAKGSLDGPERAVTLSANDQMQSADEYRRLIIAYQNGAPVRLGDVATVEQGAENSWLGAWANQAPAIVMNVQRQPGANIIATADSIRQMLPQLTESLPKSVKVTVLSDRTTNIRASVRDTQFELMLAIALVVMIIYLFLRNIPATIIPGVAVPLSLIGTFAVMVFLDFSINNLTLMALTIATGFVVDDAIVVIENISRYIEKGEKPLAAALKGAGEIGFTIISLTFSLIAVLIPLLFMGDIVGRLFREFAVTLAVAILISAVVSLTLTPMMCARMLSQQSLRKQNRFSRACERMFDRVIASYGRGLAKVLNHPWLTLSVAFATLLLSVMLWIVIPKGFFPVQDNGIIQGTLQAPQSSSYASMAQRQRQVAERILQDPAVQSLTTFVGVDGANSTLNSTRLQINLKPLDARDDRVQQVISRLQTAVATIPGVALYLQPTQDLTIDTQVSRTQYQFSLQATTLDALSHWVPKLQNALQSLPQLSEVSSDWQDRGLAAWVNVDRDSASRLGISMADVDNALYNAFGQRLISTIYTQANQYRVVLEHNTASTPGLAALETIRLTSRDGGTVPLSAIARIEQRFAPLSINHLDQFPITTFSFNVPEGYSLDDAVQAILDTEKTLALPADITTQFQGSTLAFQAALGSTVWLIVAAVVAMYIVLGVLYESFIHPITILSTLPTAGVGALLALIIAGSELDIIAIIGIILLIGIVKKNAIMMIDFALAAEREQGMSPRDAIFQACLLRFRPILMTTLAALLGALPLMLSTGVGAELRRPLGIAMVGGLLVSQVLTLFTTPVIYLLFDRLSLYVKSRFPRHKEEA</sequence>
<organism>
    <name type="scientific">Salmonella choleraesuis (strain SC-B67)</name>
    <dbReference type="NCBI Taxonomy" id="321314"/>
    <lineage>
        <taxon>Bacteria</taxon>
        <taxon>Pseudomonadati</taxon>
        <taxon>Pseudomonadota</taxon>
        <taxon>Gammaproteobacteria</taxon>
        <taxon>Enterobacterales</taxon>
        <taxon>Enterobacteriaceae</taxon>
        <taxon>Salmonella</taxon>
    </lineage>
</organism>
<proteinExistence type="inferred from homology"/>
<feature type="chain" id="PRO_1000024305" description="Multidrug resistance protein MdtB">
    <location>
        <begin position="1"/>
        <end position="1040"/>
    </location>
</feature>
<feature type="transmembrane region" description="Helical" evidence="1">
    <location>
        <begin position="25"/>
        <end position="45"/>
    </location>
</feature>
<feature type="transmembrane region" description="Helical" evidence="1">
    <location>
        <begin position="347"/>
        <end position="367"/>
    </location>
</feature>
<feature type="transmembrane region" description="Helical" evidence="1">
    <location>
        <begin position="369"/>
        <end position="389"/>
    </location>
</feature>
<feature type="transmembrane region" description="Helical" evidence="1">
    <location>
        <begin position="396"/>
        <end position="416"/>
    </location>
</feature>
<feature type="transmembrane region" description="Helical" evidence="1">
    <location>
        <begin position="440"/>
        <end position="460"/>
    </location>
</feature>
<feature type="transmembrane region" description="Helical" evidence="1">
    <location>
        <begin position="472"/>
        <end position="492"/>
    </location>
</feature>
<feature type="transmembrane region" description="Helical" evidence="1">
    <location>
        <begin position="537"/>
        <end position="557"/>
    </location>
</feature>
<feature type="transmembrane region" description="Helical" evidence="1">
    <location>
        <begin position="863"/>
        <end position="883"/>
    </location>
</feature>
<feature type="transmembrane region" description="Helical" evidence="1">
    <location>
        <begin position="888"/>
        <end position="908"/>
    </location>
</feature>
<feature type="transmembrane region" description="Helical" evidence="1">
    <location>
        <begin position="910"/>
        <end position="930"/>
    </location>
</feature>
<feature type="transmembrane region" description="Helical" evidence="1">
    <location>
        <begin position="968"/>
        <end position="988"/>
    </location>
</feature>
<feature type="transmembrane region" description="Helical" evidence="1">
    <location>
        <begin position="998"/>
        <end position="1018"/>
    </location>
</feature>
<gene>
    <name evidence="1" type="primary">mdtB</name>
    <name type="ordered locus">SCH_2130</name>
</gene>
<comment type="subunit">
    <text evidence="1">Part of a tripartite efflux system composed of MdtA, MdtB and MdtC. MdtB forms a heteromultimer with MdtC.</text>
</comment>
<comment type="subcellular location">
    <subcellularLocation>
        <location evidence="1">Cell inner membrane</location>
        <topology evidence="1">Multi-pass membrane protein</topology>
    </subcellularLocation>
</comment>
<comment type="similarity">
    <text evidence="1">Belongs to the resistance-nodulation-cell division (RND) (TC 2.A.6) family. MdtB subfamily.</text>
</comment>